<comment type="function">
    <text evidence="1">Catalyzes the GTP-dependent ribosomal translocation step during translation elongation. During this step, the ribosome changes from the pre-translocational (PRE) to the post-translocational (POST) state as the newly formed A-site-bound peptidyl-tRNA and P-site-bound deacylated tRNA move to the P and E sites, respectively. Catalyzes the coordinated movement of the two tRNA molecules, the mRNA and conformational changes in the ribosome.</text>
</comment>
<comment type="subcellular location">
    <subcellularLocation>
        <location evidence="1">Cytoplasm</location>
    </subcellularLocation>
</comment>
<comment type="similarity">
    <text evidence="1">Belongs to the TRAFAC class translation factor GTPase superfamily. Classic translation factor GTPase family. EF-G/EF-2 subfamily.</text>
</comment>
<feature type="chain" id="PRO_0000335834" description="Elongation factor G">
    <location>
        <begin position="1"/>
        <end position="692"/>
    </location>
</feature>
<feature type="domain" description="tr-type G">
    <location>
        <begin position="9"/>
        <end position="284"/>
    </location>
</feature>
<feature type="binding site" evidence="1">
    <location>
        <begin position="18"/>
        <end position="25"/>
    </location>
    <ligand>
        <name>GTP</name>
        <dbReference type="ChEBI" id="CHEBI:37565"/>
    </ligand>
</feature>
<feature type="binding site" evidence="1">
    <location>
        <begin position="82"/>
        <end position="86"/>
    </location>
    <ligand>
        <name>GTP</name>
        <dbReference type="ChEBI" id="CHEBI:37565"/>
    </ligand>
</feature>
<feature type="binding site" evidence="1">
    <location>
        <begin position="136"/>
        <end position="139"/>
    </location>
    <ligand>
        <name>GTP</name>
        <dbReference type="ChEBI" id="CHEBI:37565"/>
    </ligand>
</feature>
<reference key="1">
    <citation type="submission" date="2007-10" db="EMBL/GenBank/DDBJ databases">
        <title>Genome sequence of Campylobacter concisus 13826 isolated from human feces.</title>
        <authorList>
            <person name="Fouts D.E."/>
            <person name="Mongodin E.F."/>
            <person name="Puiu D."/>
            <person name="Sebastian Y."/>
            <person name="Miller W.G."/>
            <person name="Mandrell R.E."/>
            <person name="On S."/>
            <person name="Nelson K.E."/>
        </authorList>
    </citation>
    <scope>NUCLEOTIDE SEQUENCE [LARGE SCALE GENOMIC DNA]</scope>
    <source>
        <strain>13826</strain>
    </source>
</reference>
<sequence>MAERKTPLHKVRNIGIAAHIDAGKTTTSERILFFTGMSHKIGEVHDGAATMDWMEQEKERGITITSAATTAFWKGYQVNLIDTPGHVDFTIEVERSMRVLDGAVAVFCSVGGVQPQSETVWRQANKYHVPRIVFVNKMDRIGANFFRVEEQIRERLKANPVPIQIPIGAEDNFKGVVDLVRMKAYVWNDEKKPTDYVEEEIPAEVKDKAEEYRAKLIEAVSETDDSLMEKFFAGEELTEEEIKKGIKAGCLRMTITPMLCGTAFKNKGIQPLLDAVVDYLPAPDEIAAINGVYEDGTEVTVESTDDGEFAALAFKIMTDPFVGQLTFIRVYRGSLESGSYAYNTVQDCKERIGRLLKMHSNKREEITELFAGEIGAVVGLKNTLTGDTLASEKDKVILERMDFPEPVISVAVEPKTKADQEKMAIALQKLAQEDPSFRVSTDEESGQTIISGMGELHLEIIVDRMLREFKVDAEVGQPQVAYRETIRKAVEQEYKYAKQSGGRGQYGHVFLRIEPLPAASGFEFVNDIKGGVVPKEYIPAVEKGCKEALQSGVLAGYPVEDVKVTLFDGSYHEVDSSEMAFKLAASMGFKEGARKAGAVILEPMMKVEVETPEEYMGDVIGDLNKRRGQVNSMDDRNGVKIIAAYCPLAQMFGYSTDLRSMTQGRATYSMEFDHYEEVPKNVSEEIIKKRNG</sequence>
<evidence type="ECO:0000255" key="1">
    <source>
        <dbReference type="HAMAP-Rule" id="MF_00054"/>
    </source>
</evidence>
<accession>A8Z6I6</accession>
<gene>
    <name evidence="1" type="primary">fusA</name>
    <name type="ordered locus">Ccon26_06680</name>
    <name type="ORF">CCC13826_0181</name>
</gene>
<organism>
    <name type="scientific">Campylobacter concisus (strain 13826)</name>
    <dbReference type="NCBI Taxonomy" id="360104"/>
    <lineage>
        <taxon>Bacteria</taxon>
        <taxon>Pseudomonadati</taxon>
        <taxon>Campylobacterota</taxon>
        <taxon>Epsilonproteobacteria</taxon>
        <taxon>Campylobacterales</taxon>
        <taxon>Campylobacteraceae</taxon>
        <taxon>Campylobacter</taxon>
    </lineage>
</organism>
<dbReference type="EMBL" id="CP000792">
    <property type="protein sequence ID" value="ABW74766.1"/>
    <property type="molecule type" value="Genomic_DNA"/>
</dbReference>
<dbReference type="RefSeq" id="WP_021090006.1">
    <property type="nucleotide sequence ID" value="NC_009802.2"/>
</dbReference>
<dbReference type="SMR" id="A8Z6I6"/>
<dbReference type="STRING" id="360104.CCC13826_0181"/>
<dbReference type="KEGG" id="cco:CCC13826_0181"/>
<dbReference type="eggNOG" id="COG0480">
    <property type="taxonomic scope" value="Bacteria"/>
</dbReference>
<dbReference type="HOGENOM" id="CLU_002794_4_1_7"/>
<dbReference type="OrthoDB" id="9804431at2"/>
<dbReference type="Proteomes" id="UP000001121">
    <property type="component" value="Chromosome"/>
</dbReference>
<dbReference type="GO" id="GO:0005737">
    <property type="term" value="C:cytoplasm"/>
    <property type="evidence" value="ECO:0007669"/>
    <property type="project" value="UniProtKB-SubCell"/>
</dbReference>
<dbReference type="GO" id="GO:0005525">
    <property type="term" value="F:GTP binding"/>
    <property type="evidence" value="ECO:0007669"/>
    <property type="project" value="UniProtKB-UniRule"/>
</dbReference>
<dbReference type="GO" id="GO:0003924">
    <property type="term" value="F:GTPase activity"/>
    <property type="evidence" value="ECO:0007669"/>
    <property type="project" value="InterPro"/>
</dbReference>
<dbReference type="GO" id="GO:0003746">
    <property type="term" value="F:translation elongation factor activity"/>
    <property type="evidence" value="ECO:0007669"/>
    <property type="project" value="UniProtKB-UniRule"/>
</dbReference>
<dbReference type="GO" id="GO:0032790">
    <property type="term" value="P:ribosome disassembly"/>
    <property type="evidence" value="ECO:0007669"/>
    <property type="project" value="TreeGrafter"/>
</dbReference>
<dbReference type="CDD" id="cd01886">
    <property type="entry name" value="EF-G"/>
    <property type="match status" value="1"/>
</dbReference>
<dbReference type="CDD" id="cd16262">
    <property type="entry name" value="EFG_III"/>
    <property type="match status" value="1"/>
</dbReference>
<dbReference type="CDD" id="cd01434">
    <property type="entry name" value="EFG_mtEFG1_IV"/>
    <property type="match status" value="1"/>
</dbReference>
<dbReference type="CDD" id="cd03713">
    <property type="entry name" value="EFG_mtEFG_C"/>
    <property type="match status" value="1"/>
</dbReference>
<dbReference type="CDD" id="cd04088">
    <property type="entry name" value="EFG_mtEFG_II"/>
    <property type="match status" value="1"/>
</dbReference>
<dbReference type="FunFam" id="2.40.30.10:FF:000006">
    <property type="entry name" value="Elongation factor G"/>
    <property type="match status" value="1"/>
</dbReference>
<dbReference type="FunFam" id="3.30.230.10:FF:000003">
    <property type="entry name" value="Elongation factor G"/>
    <property type="match status" value="1"/>
</dbReference>
<dbReference type="FunFam" id="3.30.70.240:FF:000001">
    <property type="entry name" value="Elongation factor G"/>
    <property type="match status" value="1"/>
</dbReference>
<dbReference type="FunFam" id="3.30.70.870:FF:000001">
    <property type="entry name" value="Elongation factor G"/>
    <property type="match status" value="1"/>
</dbReference>
<dbReference type="FunFam" id="3.40.50.300:FF:000029">
    <property type="entry name" value="Elongation factor G"/>
    <property type="match status" value="1"/>
</dbReference>
<dbReference type="Gene3D" id="3.30.230.10">
    <property type="match status" value="1"/>
</dbReference>
<dbReference type="Gene3D" id="3.30.70.240">
    <property type="match status" value="1"/>
</dbReference>
<dbReference type="Gene3D" id="3.30.70.870">
    <property type="entry name" value="Elongation Factor G (Translational Gtpase), domain 3"/>
    <property type="match status" value="1"/>
</dbReference>
<dbReference type="Gene3D" id="3.40.50.300">
    <property type="entry name" value="P-loop containing nucleotide triphosphate hydrolases"/>
    <property type="match status" value="1"/>
</dbReference>
<dbReference type="Gene3D" id="2.40.30.10">
    <property type="entry name" value="Translation factors"/>
    <property type="match status" value="1"/>
</dbReference>
<dbReference type="HAMAP" id="MF_00054_B">
    <property type="entry name" value="EF_G_EF_2_B"/>
    <property type="match status" value="1"/>
</dbReference>
<dbReference type="InterPro" id="IPR053905">
    <property type="entry name" value="EF-G-like_DII"/>
</dbReference>
<dbReference type="InterPro" id="IPR041095">
    <property type="entry name" value="EFG_II"/>
</dbReference>
<dbReference type="InterPro" id="IPR009022">
    <property type="entry name" value="EFG_III"/>
</dbReference>
<dbReference type="InterPro" id="IPR035647">
    <property type="entry name" value="EFG_III/V"/>
</dbReference>
<dbReference type="InterPro" id="IPR047872">
    <property type="entry name" value="EFG_IV"/>
</dbReference>
<dbReference type="InterPro" id="IPR035649">
    <property type="entry name" value="EFG_V"/>
</dbReference>
<dbReference type="InterPro" id="IPR000640">
    <property type="entry name" value="EFG_V-like"/>
</dbReference>
<dbReference type="InterPro" id="IPR031157">
    <property type="entry name" value="G_TR_CS"/>
</dbReference>
<dbReference type="InterPro" id="IPR027417">
    <property type="entry name" value="P-loop_NTPase"/>
</dbReference>
<dbReference type="InterPro" id="IPR020568">
    <property type="entry name" value="Ribosomal_Su5_D2-typ_SF"/>
</dbReference>
<dbReference type="InterPro" id="IPR014721">
    <property type="entry name" value="Ribsml_uS5_D2-typ_fold_subgr"/>
</dbReference>
<dbReference type="InterPro" id="IPR005225">
    <property type="entry name" value="Small_GTP-bd"/>
</dbReference>
<dbReference type="InterPro" id="IPR000795">
    <property type="entry name" value="T_Tr_GTP-bd_dom"/>
</dbReference>
<dbReference type="InterPro" id="IPR009000">
    <property type="entry name" value="Transl_B-barrel_sf"/>
</dbReference>
<dbReference type="InterPro" id="IPR004540">
    <property type="entry name" value="Transl_elong_EFG/EF2"/>
</dbReference>
<dbReference type="InterPro" id="IPR005517">
    <property type="entry name" value="Transl_elong_EFG/EF2_IV"/>
</dbReference>
<dbReference type="NCBIfam" id="TIGR00484">
    <property type="entry name" value="EF-G"/>
    <property type="match status" value="1"/>
</dbReference>
<dbReference type="NCBIfam" id="NF009379">
    <property type="entry name" value="PRK12740.1-3"/>
    <property type="match status" value="1"/>
</dbReference>
<dbReference type="NCBIfam" id="NF009381">
    <property type="entry name" value="PRK12740.1-5"/>
    <property type="match status" value="1"/>
</dbReference>
<dbReference type="NCBIfam" id="TIGR00231">
    <property type="entry name" value="small_GTP"/>
    <property type="match status" value="1"/>
</dbReference>
<dbReference type="PANTHER" id="PTHR43261:SF1">
    <property type="entry name" value="RIBOSOME-RELEASING FACTOR 2, MITOCHONDRIAL"/>
    <property type="match status" value="1"/>
</dbReference>
<dbReference type="PANTHER" id="PTHR43261">
    <property type="entry name" value="TRANSLATION ELONGATION FACTOR G-RELATED"/>
    <property type="match status" value="1"/>
</dbReference>
<dbReference type="Pfam" id="PF22042">
    <property type="entry name" value="EF-G_D2"/>
    <property type="match status" value="1"/>
</dbReference>
<dbReference type="Pfam" id="PF00679">
    <property type="entry name" value="EFG_C"/>
    <property type="match status" value="1"/>
</dbReference>
<dbReference type="Pfam" id="PF14492">
    <property type="entry name" value="EFG_III"/>
    <property type="match status" value="1"/>
</dbReference>
<dbReference type="Pfam" id="PF03764">
    <property type="entry name" value="EFG_IV"/>
    <property type="match status" value="1"/>
</dbReference>
<dbReference type="Pfam" id="PF00009">
    <property type="entry name" value="GTP_EFTU"/>
    <property type="match status" value="1"/>
</dbReference>
<dbReference type="PRINTS" id="PR00315">
    <property type="entry name" value="ELONGATNFCT"/>
</dbReference>
<dbReference type="SMART" id="SM00838">
    <property type="entry name" value="EFG_C"/>
    <property type="match status" value="1"/>
</dbReference>
<dbReference type="SMART" id="SM00889">
    <property type="entry name" value="EFG_IV"/>
    <property type="match status" value="1"/>
</dbReference>
<dbReference type="SUPFAM" id="SSF54980">
    <property type="entry name" value="EF-G C-terminal domain-like"/>
    <property type="match status" value="2"/>
</dbReference>
<dbReference type="SUPFAM" id="SSF52540">
    <property type="entry name" value="P-loop containing nucleoside triphosphate hydrolases"/>
    <property type="match status" value="1"/>
</dbReference>
<dbReference type="SUPFAM" id="SSF54211">
    <property type="entry name" value="Ribosomal protein S5 domain 2-like"/>
    <property type="match status" value="1"/>
</dbReference>
<dbReference type="SUPFAM" id="SSF50447">
    <property type="entry name" value="Translation proteins"/>
    <property type="match status" value="1"/>
</dbReference>
<dbReference type="PROSITE" id="PS00301">
    <property type="entry name" value="G_TR_1"/>
    <property type="match status" value="1"/>
</dbReference>
<dbReference type="PROSITE" id="PS51722">
    <property type="entry name" value="G_TR_2"/>
    <property type="match status" value="1"/>
</dbReference>
<protein>
    <recommendedName>
        <fullName evidence="1">Elongation factor G</fullName>
        <shortName evidence="1">EF-G</shortName>
    </recommendedName>
</protein>
<proteinExistence type="inferred from homology"/>
<keyword id="KW-0963">Cytoplasm</keyword>
<keyword id="KW-0251">Elongation factor</keyword>
<keyword id="KW-0342">GTP-binding</keyword>
<keyword id="KW-0547">Nucleotide-binding</keyword>
<keyword id="KW-0648">Protein biosynthesis</keyword>
<name>EFG_CAMC1</name>